<proteinExistence type="inferred from homology"/>
<accession>C5A0I6</accession>
<protein>
    <recommendedName>
        <fullName evidence="1">HTH-type transcriptional regulator ArgP</fullName>
    </recommendedName>
</protein>
<sequence length="297" mass="33472">MKRPDYRTLQALDAVIRERGFERAAQKLCITQSAVSQRIKQLENMFGQPLLVRTVPPRPTEQGQKLLALLRQVELLEEEWLGDEQTGSTPLLLSLAVNADSLATWLLPALAPVLADSPIRLNLQVEDETRTQERLRRGEVVGAVSIQHQALPSCLVDKLGALDYLFVSSKPFAEKYFPNGVTRSALLKAPVVAFDHLDDMHQAFLQQNFDLPPGSVPCHIVNSSEAFVQLARQGTTCCMIPHLQIEKELASGELIDLTPGLFQRRMLYWHRFAPESRMMRKVTDALLDYGHKVLRQD</sequence>
<keyword id="KW-0238">DNA-binding</keyword>
<keyword id="KW-0804">Transcription</keyword>
<keyword id="KW-0805">Transcription regulation</keyword>
<evidence type="ECO:0000255" key="1">
    <source>
        <dbReference type="HAMAP-Rule" id="MF_00513"/>
    </source>
</evidence>
<evidence type="ECO:0000305" key="2"/>
<reference key="1">
    <citation type="journal article" date="2009" name="J. Bacteriol.">
        <title>Genomic sequencing reveals regulatory mutations and recombinational events in the widely used MC4100 lineage of Escherichia coli K-12.</title>
        <authorList>
            <person name="Ferenci T."/>
            <person name="Zhou Z."/>
            <person name="Betteridge T."/>
            <person name="Ren Y."/>
            <person name="Liu Y."/>
            <person name="Feng L."/>
            <person name="Reeves P.R."/>
            <person name="Wang L."/>
        </authorList>
    </citation>
    <scope>NUCLEOTIDE SEQUENCE [LARGE SCALE GENOMIC DNA]</scope>
    <source>
        <strain>K12 / MC4100 / BW2952</strain>
    </source>
</reference>
<name>ARGP_ECOBW</name>
<comment type="function">
    <text evidence="1">Controls the transcription of genes involved in arginine and lysine metabolism.</text>
</comment>
<comment type="subunit">
    <text evidence="1">Homodimer.</text>
</comment>
<comment type="similarity">
    <text evidence="2">Belongs to the LysR transcriptional regulatory family.</text>
</comment>
<dbReference type="EMBL" id="CP001396">
    <property type="protein sequence ID" value="ACR62909.1"/>
    <property type="molecule type" value="Genomic_DNA"/>
</dbReference>
<dbReference type="RefSeq" id="WP_000828351.1">
    <property type="nucleotide sequence ID" value="NC_012759.1"/>
</dbReference>
<dbReference type="SMR" id="C5A0I6"/>
<dbReference type="GeneID" id="93779084"/>
<dbReference type="KEGG" id="ebw:BWG_2639"/>
<dbReference type="HOGENOM" id="CLU_063829_0_0_6"/>
<dbReference type="GO" id="GO:0003677">
    <property type="term" value="F:DNA binding"/>
    <property type="evidence" value="ECO:0007669"/>
    <property type="project" value="UniProtKB-UniRule"/>
</dbReference>
<dbReference type="GO" id="GO:0003700">
    <property type="term" value="F:DNA-binding transcription factor activity"/>
    <property type="evidence" value="ECO:0007669"/>
    <property type="project" value="UniProtKB-UniRule"/>
</dbReference>
<dbReference type="CDD" id="cd08428">
    <property type="entry name" value="PBP2_IciA_ArgP"/>
    <property type="match status" value="1"/>
</dbReference>
<dbReference type="FunFam" id="1.10.10.10:FF:000061">
    <property type="entry name" value="HTH-type transcriptional regulator ArgP"/>
    <property type="match status" value="1"/>
</dbReference>
<dbReference type="FunFam" id="3.40.190.290:FF:000002">
    <property type="entry name" value="HTH-type transcriptional regulator ArgP"/>
    <property type="match status" value="1"/>
</dbReference>
<dbReference type="Gene3D" id="3.40.190.290">
    <property type="match status" value="1"/>
</dbReference>
<dbReference type="Gene3D" id="1.10.10.10">
    <property type="entry name" value="Winged helix-like DNA-binding domain superfamily/Winged helix DNA-binding domain"/>
    <property type="match status" value="1"/>
</dbReference>
<dbReference type="HAMAP" id="MF_00513">
    <property type="entry name" value="HTH_type_ArgP"/>
    <property type="match status" value="1"/>
</dbReference>
<dbReference type="InterPro" id="IPR017685">
    <property type="entry name" value="ArgP"/>
</dbReference>
<dbReference type="InterPro" id="IPR023490">
    <property type="entry name" value="ArgP_gammaproteobact"/>
</dbReference>
<dbReference type="InterPro" id="IPR050176">
    <property type="entry name" value="LTTR"/>
</dbReference>
<dbReference type="InterPro" id="IPR005119">
    <property type="entry name" value="LysR_subst-bd"/>
</dbReference>
<dbReference type="InterPro" id="IPR000847">
    <property type="entry name" value="Tscrpt_reg_HTH_LysR"/>
</dbReference>
<dbReference type="InterPro" id="IPR036388">
    <property type="entry name" value="WH-like_DNA-bd_sf"/>
</dbReference>
<dbReference type="InterPro" id="IPR036390">
    <property type="entry name" value="WH_DNA-bd_sf"/>
</dbReference>
<dbReference type="NCBIfam" id="TIGR03298">
    <property type="entry name" value="argP"/>
    <property type="match status" value="1"/>
</dbReference>
<dbReference type="NCBIfam" id="NF002964">
    <property type="entry name" value="PRK03635.1"/>
    <property type="match status" value="1"/>
</dbReference>
<dbReference type="NCBIfam" id="NF009888">
    <property type="entry name" value="PRK13348.1"/>
    <property type="match status" value="1"/>
</dbReference>
<dbReference type="PANTHER" id="PTHR30579:SF2">
    <property type="entry name" value="HTH-TYPE TRANSCRIPTIONAL REGULATOR ARGP"/>
    <property type="match status" value="1"/>
</dbReference>
<dbReference type="PANTHER" id="PTHR30579">
    <property type="entry name" value="TRANSCRIPTIONAL REGULATOR"/>
    <property type="match status" value="1"/>
</dbReference>
<dbReference type="Pfam" id="PF00126">
    <property type="entry name" value="HTH_1"/>
    <property type="match status" value="1"/>
</dbReference>
<dbReference type="Pfam" id="PF03466">
    <property type="entry name" value="LysR_substrate"/>
    <property type="match status" value="1"/>
</dbReference>
<dbReference type="PRINTS" id="PR00039">
    <property type="entry name" value="HTHLYSR"/>
</dbReference>
<dbReference type="SUPFAM" id="SSF53850">
    <property type="entry name" value="Periplasmic binding protein-like II"/>
    <property type="match status" value="1"/>
</dbReference>
<dbReference type="SUPFAM" id="SSF46785">
    <property type="entry name" value="Winged helix' DNA-binding domain"/>
    <property type="match status" value="1"/>
</dbReference>
<dbReference type="PROSITE" id="PS50931">
    <property type="entry name" value="HTH_LYSR"/>
    <property type="match status" value="1"/>
</dbReference>
<feature type="chain" id="PRO_1000206628" description="HTH-type transcriptional regulator ArgP">
    <location>
        <begin position="1"/>
        <end position="297"/>
    </location>
</feature>
<feature type="domain" description="HTH lysR-type" evidence="1">
    <location>
        <begin position="4"/>
        <end position="60"/>
    </location>
</feature>
<feature type="DNA-binding region" description="H-T-H motif" evidence="1">
    <location>
        <begin position="21"/>
        <end position="40"/>
    </location>
</feature>
<organism>
    <name type="scientific">Escherichia coli (strain K12 / MC4100 / BW2952)</name>
    <dbReference type="NCBI Taxonomy" id="595496"/>
    <lineage>
        <taxon>Bacteria</taxon>
        <taxon>Pseudomonadati</taxon>
        <taxon>Pseudomonadota</taxon>
        <taxon>Gammaproteobacteria</taxon>
        <taxon>Enterobacterales</taxon>
        <taxon>Enterobacteriaceae</taxon>
        <taxon>Escherichia</taxon>
    </lineage>
</organism>
<gene>
    <name evidence="1" type="primary">argP</name>
    <name type="synonym">iciA</name>
    <name type="ordered locus">BWG_2639</name>
</gene>